<comment type="function">
    <text evidence="1">Degradation of extracellular 5'-nucleotides for nutritional needs.</text>
</comment>
<comment type="catalytic activity">
    <reaction>
        <text>a ribonucleoside 5'-phosphate + H2O = a ribonucleoside + phosphate</text>
        <dbReference type="Rhea" id="RHEA:12484"/>
        <dbReference type="ChEBI" id="CHEBI:15377"/>
        <dbReference type="ChEBI" id="CHEBI:18254"/>
        <dbReference type="ChEBI" id="CHEBI:43474"/>
        <dbReference type="ChEBI" id="CHEBI:58043"/>
        <dbReference type="EC" id="3.1.3.5"/>
    </reaction>
</comment>
<comment type="cofactor">
    <cofactor evidence="1">
        <name>chloride</name>
        <dbReference type="ChEBI" id="CHEBI:17996"/>
    </cofactor>
    <text evidence="1">Chloride.</text>
</comment>
<comment type="cofactor">
    <cofactor evidence="1">
        <name>Mg(2+)</name>
        <dbReference type="ChEBI" id="CHEBI:18420"/>
    </cofactor>
</comment>
<comment type="subcellular location">
    <subcellularLocation>
        <location evidence="1">Cell outer membrane</location>
        <topology evidence="2">Lipid-anchor</topology>
    </subcellularLocation>
</comment>
<comment type="similarity">
    <text evidence="3">Belongs to the 5'-nucleotidase family.</text>
</comment>
<feature type="signal peptide" evidence="2">
    <location>
        <begin position="1"/>
        <end position="21"/>
    </location>
</feature>
<feature type="chain" id="PRO_0000000028" description="5'-nucleotidase">
    <location>
        <begin position="22"/>
        <end position="553"/>
    </location>
</feature>
<feature type="binding site" evidence="1">
    <location>
        <position position="45"/>
    </location>
    <ligand>
        <name>a divalent metal cation</name>
        <dbReference type="ChEBI" id="CHEBI:60240"/>
        <label>1</label>
    </ligand>
</feature>
<feature type="binding site" evidence="1">
    <location>
        <position position="47"/>
    </location>
    <ligand>
        <name>a divalent metal cation</name>
        <dbReference type="ChEBI" id="CHEBI:60240"/>
        <label>1</label>
    </ligand>
</feature>
<feature type="binding site" evidence="1">
    <location>
        <position position="88"/>
    </location>
    <ligand>
        <name>a divalent metal cation</name>
        <dbReference type="ChEBI" id="CHEBI:60240"/>
        <label>1</label>
    </ligand>
</feature>
<feature type="binding site" evidence="1">
    <location>
        <position position="88"/>
    </location>
    <ligand>
        <name>a divalent metal cation</name>
        <dbReference type="ChEBI" id="CHEBI:60240"/>
        <label>2</label>
    </ligand>
</feature>
<feature type="binding site" evidence="1">
    <location>
        <position position="120"/>
    </location>
    <ligand>
        <name>a divalent metal cation</name>
        <dbReference type="ChEBI" id="CHEBI:60240"/>
        <label>2</label>
    </ligand>
</feature>
<feature type="binding site" evidence="1">
    <location>
        <position position="221"/>
    </location>
    <ligand>
        <name>a divalent metal cation</name>
        <dbReference type="ChEBI" id="CHEBI:60240"/>
        <label>2</label>
    </ligand>
</feature>
<feature type="binding site" evidence="1">
    <location>
        <position position="256"/>
    </location>
    <ligand>
        <name>a divalent metal cation</name>
        <dbReference type="ChEBI" id="CHEBI:60240"/>
        <label>2</label>
    </ligand>
</feature>
<feature type="binding site" evidence="1">
    <location>
        <position position="258"/>
    </location>
    <ligand>
        <name>a divalent metal cation</name>
        <dbReference type="ChEBI" id="CHEBI:60240"/>
        <label>1</label>
    </ligand>
</feature>
<feature type="binding site" evidence="1">
    <location>
        <position position="432"/>
    </location>
    <ligand>
        <name>substrate</name>
    </ligand>
</feature>
<feature type="binding site" evidence="1">
    <location>
        <begin position="501"/>
        <end position="507"/>
    </location>
    <ligand>
        <name>substrate</name>
    </ligand>
</feature>
<feature type="site" description="Transition state stabilizer" evidence="1">
    <location>
        <position position="121"/>
    </location>
</feature>
<feature type="site" description="Transition state stabilizer" evidence="1">
    <location>
        <position position="124"/>
    </location>
</feature>
<feature type="lipid moiety-binding region" description="N-palmitoyl cysteine" evidence="3">
    <location>
        <position position="22"/>
    </location>
</feature>
<feature type="lipid moiety-binding region" description="S-diacylglycerol cysteine" evidence="3">
    <location>
        <position position="22"/>
    </location>
</feature>
<accession>Q9KQ30</accession>
<organism>
    <name type="scientific">Vibrio cholerae serotype O1 (strain ATCC 39315 / El Tor Inaba N16961)</name>
    <dbReference type="NCBI Taxonomy" id="243277"/>
    <lineage>
        <taxon>Bacteria</taxon>
        <taxon>Pseudomonadati</taxon>
        <taxon>Pseudomonadota</taxon>
        <taxon>Gammaproteobacteria</taxon>
        <taxon>Vibrionales</taxon>
        <taxon>Vibrionaceae</taxon>
        <taxon>Vibrio</taxon>
    </lineage>
</organism>
<proteinExistence type="inferred from homology"/>
<evidence type="ECO:0000250" key="1"/>
<evidence type="ECO:0000255" key="2">
    <source>
        <dbReference type="PROSITE-ProRule" id="PRU00303"/>
    </source>
</evidence>
<evidence type="ECO:0000305" key="3"/>
<dbReference type="EC" id="3.1.3.5"/>
<dbReference type="EMBL" id="AE003852">
    <property type="protein sequence ID" value="AAF95319.1"/>
    <property type="molecule type" value="Genomic_DNA"/>
</dbReference>
<dbReference type="PIR" id="E82108">
    <property type="entry name" value="E82108"/>
</dbReference>
<dbReference type="RefSeq" id="NP_231805.1">
    <property type="nucleotide sequence ID" value="NC_002505.1"/>
</dbReference>
<dbReference type="SMR" id="Q9KQ30"/>
<dbReference type="STRING" id="243277.VC_2174"/>
<dbReference type="DNASU" id="2613310"/>
<dbReference type="EnsemblBacteria" id="AAF95319">
    <property type="protein sequence ID" value="AAF95319"/>
    <property type="gene ID" value="VC_2174"/>
</dbReference>
<dbReference type="KEGG" id="vch:VC_2174"/>
<dbReference type="PATRIC" id="fig|243277.26.peg.2072"/>
<dbReference type="eggNOG" id="COG0737">
    <property type="taxonomic scope" value="Bacteria"/>
</dbReference>
<dbReference type="HOGENOM" id="CLU_005854_7_0_6"/>
<dbReference type="Proteomes" id="UP000000584">
    <property type="component" value="Chromosome 1"/>
</dbReference>
<dbReference type="GO" id="GO:0009279">
    <property type="term" value="C:cell outer membrane"/>
    <property type="evidence" value="ECO:0007669"/>
    <property type="project" value="UniProtKB-SubCell"/>
</dbReference>
<dbReference type="GO" id="GO:0030288">
    <property type="term" value="C:outer membrane-bounded periplasmic space"/>
    <property type="evidence" value="ECO:0000318"/>
    <property type="project" value="GO_Central"/>
</dbReference>
<dbReference type="GO" id="GO:0008253">
    <property type="term" value="F:5'-nucleotidase activity"/>
    <property type="evidence" value="ECO:0000318"/>
    <property type="project" value="GO_Central"/>
</dbReference>
<dbReference type="GO" id="GO:0046872">
    <property type="term" value="F:metal ion binding"/>
    <property type="evidence" value="ECO:0007669"/>
    <property type="project" value="UniProtKB-KW"/>
</dbReference>
<dbReference type="GO" id="GO:0000166">
    <property type="term" value="F:nucleotide binding"/>
    <property type="evidence" value="ECO:0007669"/>
    <property type="project" value="UniProtKB-KW"/>
</dbReference>
<dbReference type="GO" id="GO:0008768">
    <property type="term" value="F:UDP-sugar diphosphatase activity"/>
    <property type="evidence" value="ECO:0000318"/>
    <property type="project" value="GO_Central"/>
</dbReference>
<dbReference type="GO" id="GO:0009166">
    <property type="term" value="P:nucleotide catabolic process"/>
    <property type="evidence" value="ECO:0007669"/>
    <property type="project" value="InterPro"/>
</dbReference>
<dbReference type="CDD" id="cd07405">
    <property type="entry name" value="MPP_UshA_N"/>
    <property type="match status" value="1"/>
</dbReference>
<dbReference type="FunFam" id="3.60.21.10:FF:000025">
    <property type="entry name" value="Protein UshA"/>
    <property type="match status" value="1"/>
</dbReference>
<dbReference type="FunFam" id="3.90.780.10:FF:000003">
    <property type="entry name" value="Protein UshA"/>
    <property type="match status" value="1"/>
</dbReference>
<dbReference type="Gene3D" id="3.60.21.10">
    <property type="match status" value="1"/>
</dbReference>
<dbReference type="Gene3D" id="3.90.780.10">
    <property type="entry name" value="5'-Nucleotidase, C-terminal domain"/>
    <property type="match status" value="1"/>
</dbReference>
<dbReference type="InterPro" id="IPR008334">
    <property type="entry name" value="5'-Nucleotdase_C"/>
</dbReference>
<dbReference type="InterPro" id="IPR036907">
    <property type="entry name" value="5'-Nucleotdase_C_sf"/>
</dbReference>
<dbReference type="InterPro" id="IPR006146">
    <property type="entry name" value="5'-Nucleotdase_CS"/>
</dbReference>
<dbReference type="InterPro" id="IPR006179">
    <property type="entry name" value="5_nucleotidase/apyrase"/>
</dbReference>
<dbReference type="InterPro" id="IPR004843">
    <property type="entry name" value="Calcineurin-like_PHP_ApaH"/>
</dbReference>
<dbReference type="InterPro" id="IPR029052">
    <property type="entry name" value="Metallo-depent_PP-like"/>
</dbReference>
<dbReference type="NCBIfam" id="NF007109">
    <property type="entry name" value="PRK09558.1"/>
    <property type="match status" value="1"/>
</dbReference>
<dbReference type="PANTHER" id="PTHR11575">
    <property type="entry name" value="5'-NUCLEOTIDASE-RELATED"/>
    <property type="match status" value="1"/>
</dbReference>
<dbReference type="PANTHER" id="PTHR11575:SF46">
    <property type="entry name" value="PROTEIN USHA"/>
    <property type="match status" value="1"/>
</dbReference>
<dbReference type="Pfam" id="PF02872">
    <property type="entry name" value="5_nucleotid_C"/>
    <property type="match status" value="1"/>
</dbReference>
<dbReference type="Pfam" id="PF00149">
    <property type="entry name" value="Metallophos"/>
    <property type="match status" value="1"/>
</dbReference>
<dbReference type="PRINTS" id="PR01607">
    <property type="entry name" value="APYRASEFAMLY"/>
</dbReference>
<dbReference type="SUPFAM" id="SSF55816">
    <property type="entry name" value="5'-nucleotidase (syn. UDP-sugar hydrolase), C-terminal domain"/>
    <property type="match status" value="1"/>
</dbReference>
<dbReference type="SUPFAM" id="SSF56300">
    <property type="entry name" value="Metallo-dependent phosphatases"/>
    <property type="match status" value="1"/>
</dbReference>
<dbReference type="PROSITE" id="PS00785">
    <property type="entry name" value="5_NUCLEOTIDASE_1"/>
    <property type="match status" value="1"/>
</dbReference>
<dbReference type="PROSITE" id="PS00786">
    <property type="entry name" value="5_NUCLEOTIDASE_2"/>
    <property type="match status" value="1"/>
</dbReference>
<dbReference type="PROSITE" id="PS51257">
    <property type="entry name" value="PROKAR_LIPOPROTEIN"/>
    <property type="match status" value="1"/>
</dbReference>
<protein>
    <recommendedName>
        <fullName>5'-nucleotidase</fullName>
        <ecNumber>3.1.3.5</ecNumber>
    </recommendedName>
</protein>
<gene>
    <name type="primary">nutA</name>
    <name type="ordered locus">VC_2174</name>
</gene>
<sequence>MKQGLILKSVLSAAIIASLAGCATAPAQQWEADKTYKLTILHTNDHHGRFWQNQYGEYGMAARKTLIDQLRADIEAQGGSVLLLSGGDINTGVPESDLQDAEPDFKGMSKIGYDAMALGNHEFDNPLEVLFKQKEWANFPMLSANIYDKATGKRLFEPYHIFDKQGIKIAVIGLTTEDTAKIGNPEYIGGIDFRDPKEEAKKVIAELKKKEKPDLIIAVTHMGHYQNGEHGVNAPGDVALARYLPAGELDMIVGGHSQEPVCMEGPNLVKKNFKPGDECKPDIQNGTYIVQAYEWGKYVGRADYEFRNGELNMVSYNLIPVNLKKKVEVNGETQRVFATSEIKEDSAMLEFLRPFQEKGQEQLSIKIAHSNGKLEGDRNVVRFEQTNLGRMIAMAHMQRAKADFAVMNSGGVRDSIQAGDITYKDVLKVQPFGNIVSYVDMNGQEVLDYLNVVATKPVDSGAYAQFAGISMTVADGKVSNVVIGGKQLRLDATYRFTVPSFNAAGGDGYPKITDHPGYVNTGFVDAEVLKDYLEANSPIDVNRFAPAGEIVYR</sequence>
<keyword id="KW-0998">Cell outer membrane</keyword>
<keyword id="KW-0378">Hydrolase</keyword>
<keyword id="KW-0449">Lipoprotein</keyword>
<keyword id="KW-0460">Magnesium</keyword>
<keyword id="KW-0472">Membrane</keyword>
<keyword id="KW-0479">Metal-binding</keyword>
<keyword id="KW-0547">Nucleotide-binding</keyword>
<keyword id="KW-0564">Palmitate</keyword>
<keyword id="KW-1185">Reference proteome</keyword>
<keyword id="KW-0732">Signal</keyword>
<name>5NTD_VIBCH</name>
<reference key="1">
    <citation type="journal article" date="2000" name="Nature">
        <title>DNA sequence of both chromosomes of the cholera pathogen Vibrio cholerae.</title>
        <authorList>
            <person name="Heidelberg J.F."/>
            <person name="Eisen J.A."/>
            <person name="Nelson W.C."/>
            <person name="Clayton R.A."/>
            <person name="Gwinn M.L."/>
            <person name="Dodson R.J."/>
            <person name="Haft D.H."/>
            <person name="Hickey E.K."/>
            <person name="Peterson J.D."/>
            <person name="Umayam L.A."/>
            <person name="Gill S.R."/>
            <person name="Nelson K.E."/>
            <person name="Read T.D."/>
            <person name="Tettelin H."/>
            <person name="Richardson D.L."/>
            <person name="Ermolaeva M.D."/>
            <person name="Vamathevan J.J."/>
            <person name="Bass S."/>
            <person name="Qin H."/>
            <person name="Dragoi I."/>
            <person name="Sellers P."/>
            <person name="McDonald L.A."/>
            <person name="Utterback T.R."/>
            <person name="Fleischmann R.D."/>
            <person name="Nierman W.C."/>
            <person name="White O."/>
            <person name="Salzberg S.L."/>
            <person name="Smith H.O."/>
            <person name="Colwell R.R."/>
            <person name="Mekalanos J.J."/>
            <person name="Venter J.C."/>
            <person name="Fraser C.M."/>
        </authorList>
    </citation>
    <scope>NUCLEOTIDE SEQUENCE [LARGE SCALE GENOMIC DNA]</scope>
    <source>
        <strain>ATCC 39315 / El Tor Inaba N16961</strain>
    </source>
</reference>